<keyword id="KW-0407">Ion channel</keyword>
<keyword id="KW-0406">Ion transport</keyword>
<keyword id="KW-0472">Membrane</keyword>
<keyword id="KW-0597">Phosphoprotein</keyword>
<keyword id="KW-0630">Potassium</keyword>
<keyword id="KW-0633">Potassium transport</keyword>
<keyword id="KW-1185">Reference proteome</keyword>
<keyword id="KW-0812">Transmembrane</keyword>
<keyword id="KW-1133">Transmembrane helix</keyword>
<keyword id="KW-0813">Transport</keyword>
<keyword id="KW-0851">Voltage-gated channel</keyword>
<dbReference type="EMBL" id="D88159">
    <property type="protein sequence ID" value="BAA13550.1"/>
    <property type="molecule type" value="mRNA"/>
</dbReference>
<dbReference type="EMBL" id="BC003756">
    <property type="protein sequence ID" value="AAH03756.1"/>
    <property type="molecule type" value="mRNA"/>
</dbReference>
<dbReference type="CCDS" id="CCDS20685.1"/>
<dbReference type="RefSeq" id="NP_001317292.1">
    <property type="nucleotide sequence ID" value="NM_001330363.1"/>
</dbReference>
<dbReference type="RefSeq" id="NP_032454.1">
    <property type="nucleotide sequence ID" value="NM_008428.5"/>
</dbReference>
<dbReference type="SMR" id="P97794"/>
<dbReference type="CORUM" id="P97794"/>
<dbReference type="FunCoup" id="P97794">
    <property type="interactions" value="179"/>
</dbReference>
<dbReference type="STRING" id="10090.ENSMUSP00000145440"/>
<dbReference type="iPTMnet" id="P97794"/>
<dbReference type="PhosphoSitePlus" id="P97794"/>
<dbReference type="PaxDb" id="10090-ENSMUSP00000032374"/>
<dbReference type="ProteomicsDB" id="268960"/>
<dbReference type="ABCD" id="P97794">
    <property type="antibodies" value="2 sequenced antibodies"/>
</dbReference>
<dbReference type="Antibodypedia" id="4014">
    <property type="antibodies" value="262 antibodies from 31 providers"/>
</dbReference>
<dbReference type="DNASU" id="16523"/>
<dbReference type="Ensembl" id="ENSMUST00000203945.3">
    <property type="protein sequence ID" value="ENSMUSP00000145440.2"/>
    <property type="gene ID" value="ENSMUSG00000030247.10"/>
</dbReference>
<dbReference type="GeneID" id="16523"/>
<dbReference type="KEGG" id="mmu:16523"/>
<dbReference type="UCSC" id="uc009epk.1">
    <property type="organism name" value="mouse"/>
</dbReference>
<dbReference type="AGR" id="MGI:1100508"/>
<dbReference type="CTD" id="3764"/>
<dbReference type="MGI" id="MGI:1100508">
    <property type="gene designation" value="Kcnj8"/>
</dbReference>
<dbReference type="VEuPathDB" id="HostDB:ENSMUSG00000030247"/>
<dbReference type="eggNOG" id="KOG3827">
    <property type="taxonomic scope" value="Eukaryota"/>
</dbReference>
<dbReference type="GeneTree" id="ENSGT01130000278330"/>
<dbReference type="HOGENOM" id="CLU_022738_4_0_1"/>
<dbReference type="InParanoid" id="P97794"/>
<dbReference type="OMA" id="RMITEHC"/>
<dbReference type="OrthoDB" id="273257at2759"/>
<dbReference type="PhylomeDB" id="P97794"/>
<dbReference type="TreeFam" id="TF313676"/>
<dbReference type="Reactome" id="R-MMU-1296025">
    <property type="pathway name" value="ATP sensitive Potassium channels"/>
</dbReference>
<dbReference type="BioGRID-ORCS" id="16523">
    <property type="hits" value="1 hit in 77 CRISPR screens"/>
</dbReference>
<dbReference type="ChiTaRS" id="Kcnj8">
    <property type="organism name" value="mouse"/>
</dbReference>
<dbReference type="PRO" id="PR:P97794"/>
<dbReference type="Proteomes" id="UP000000589">
    <property type="component" value="Chromosome 6"/>
</dbReference>
<dbReference type="RNAct" id="P97794">
    <property type="molecule type" value="protein"/>
</dbReference>
<dbReference type="Bgee" id="ENSMUSG00000030247">
    <property type="expression patterns" value="Expressed in brain blood vessel and 176 other cell types or tissues"/>
</dbReference>
<dbReference type="ExpressionAtlas" id="P97794">
    <property type="expression patterns" value="baseline and differential"/>
</dbReference>
<dbReference type="GO" id="GO:0098978">
    <property type="term" value="C:glutamatergic synapse"/>
    <property type="evidence" value="ECO:0007669"/>
    <property type="project" value="Ensembl"/>
</dbReference>
<dbReference type="GO" id="GO:0008282">
    <property type="term" value="C:inward rectifying potassium channel"/>
    <property type="evidence" value="ECO:0007669"/>
    <property type="project" value="Ensembl"/>
</dbReference>
<dbReference type="GO" id="GO:0030016">
    <property type="term" value="C:myofibril"/>
    <property type="evidence" value="ECO:0000314"/>
    <property type="project" value="MGI"/>
</dbReference>
<dbReference type="GO" id="GO:0098793">
    <property type="term" value="C:presynapse"/>
    <property type="evidence" value="ECO:0000314"/>
    <property type="project" value="MGI"/>
</dbReference>
<dbReference type="GO" id="GO:0048787">
    <property type="term" value="C:presynaptic active zone membrane"/>
    <property type="evidence" value="ECO:0007669"/>
    <property type="project" value="Ensembl"/>
</dbReference>
<dbReference type="GO" id="GO:0032991">
    <property type="term" value="C:protein-containing complex"/>
    <property type="evidence" value="ECO:0000314"/>
    <property type="project" value="MGI"/>
</dbReference>
<dbReference type="GO" id="GO:0042383">
    <property type="term" value="C:sarcolemma"/>
    <property type="evidence" value="ECO:0007669"/>
    <property type="project" value="Ensembl"/>
</dbReference>
<dbReference type="GO" id="GO:0005524">
    <property type="term" value="F:ATP binding"/>
    <property type="evidence" value="ECO:0007669"/>
    <property type="project" value="Ensembl"/>
</dbReference>
<dbReference type="GO" id="GO:0015272">
    <property type="term" value="F:ATP-activated inward rectifier potassium channel activity"/>
    <property type="evidence" value="ECO:0000250"/>
    <property type="project" value="UniProtKB"/>
</dbReference>
<dbReference type="GO" id="GO:0019829">
    <property type="term" value="F:ATPase-coupled monoatomic cation transmembrane transporter activity"/>
    <property type="evidence" value="ECO:0007669"/>
    <property type="project" value="Ensembl"/>
</dbReference>
<dbReference type="GO" id="GO:0017098">
    <property type="term" value="F:sulfonylurea receptor binding"/>
    <property type="evidence" value="ECO:0007669"/>
    <property type="project" value="Ensembl"/>
</dbReference>
<dbReference type="GO" id="GO:0099508">
    <property type="term" value="F:voltage-gated monoatomic ion channel activity involved in regulation of presynaptic membrane potential"/>
    <property type="evidence" value="ECO:0007669"/>
    <property type="project" value="Ensembl"/>
</dbReference>
<dbReference type="GO" id="GO:1902282">
    <property type="term" value="F:voltage-gated potassium channel activity involved in ventricular cardiac muscle cell action potential repolarization"/>
    <property type="evidence" value="ECO:0007669"/>
    <property type="project" value="Ensembl"/>
</dbReference>
<dbReference type="GO" id="GO:0001508">
    <property type="term" value="P:action potential"/>
    <property type="evidence" value="ECO:0000315"/>
    <property type="project" value="MGI"/>
</dbReference>
<dbReference type="GO" id="GO:0002250">
    <property type="term" value="P:adaptive immune response"/>
    <property type="evidence" value="ECO:0000315"/>
    <property type="project" value="MGI"/>
</dbReference>
<dbReference type="GO" id="GO:0006915">
    <property type="term" value="P:apoptotic process"/>
    <property type="evidence" value="ECO:0000315"/>
    <property type="project" value="MGI"/>
</dbReference>
<dbReference type="GO" id="GO:0060922">
    <property type="term" value="P:atrioventricular node cell differentiation"/>
    <property type="evidence" value="ECO:0000315"/>
    <property type="project" value="MGI"/>
</dbReference>
<dbReference type="GO" id="GO:0001568">
    <property type="term" value="P:blood vessel development"/>
    <property type="evidence" value="ECO:0000315"/>
    <property type="project" value="MGI"/>
</dbReference>
<dbReference type="GO" id="GO:0070588">
    <property type="term" value="P:calcium ion transmembrane transport"/>
    <property type="evidence" value="ECO:0000315"/>
    <property type="project" value="MGI"/>
</dbReference>
<dbReference type="GO" id="GO:0061762">
    <property type="term" value="P:CAMKK-AMPK signaling cascade"/>
    <property type="evidence" value="ECO:0000315"/>
    <property type="project" value="MGI"/>
</dbReference>
<dbReference type="GO" id="GO:0060920">
    <property type="term" value="P:cardiac pacemaker cell differentiation"/>
    <property type="evidence" value="ECO:0000315"/>
    <property type="project" value="MGI"/>
</dbReference>
<dbReference type="GO" id="GO:0008283">
    <property type="term" value="P:cell population proliferation"/>
    <property type="evidence" value="ECO:0000315"/>
    <property type="project" value="MGI"/>
</dbReference>
<dbReference type="GO" id="GO:0072359">
    <property type="term" value="P:circulatory system development"/>
    <property type="evidence" value="ECO:0000315"/>
    <property type="project" value="MGI"/>
</dbReference>
<dbReference type="GO" id="GO:0060976">
    <property type="term" value="P:coronary vasculature development"/>
    <property type="evidence" value="ECO:0000315"/>
    <property type="project" value="MGI"/>
</dbReference>
<dbReference type="GO" id="GO:0051607">
    <property type="term" value="P:defense response to virus"/>
    <property type="evidence" value="ECO:0000315"/>
    <property type="project" value="MGI"/>
</dbReference>
<dbReference type="GO" id="GO:0008340">
    <property type="term" value="P:determination of adult lifespan"/>
    <property type="evidence" value="ECO:0000316"/>
    <property type="project" value="MGI"/>
</dbReference>
<dbReference type="GO" id="GO:0030010">
    <property type="term" value="P:establishment of cell polarity"/>
    <property type="evidence" value="ECO:0000314"/>
    <property type="project" value="MGI"/>
</dbReference>
<dbReference type="GO" id="GO:0045444">
    <property type="term" value="P:fat cell differentiation"/>
    <property type="evidence" value="ECO:0000315"/>
    <property type="project" value="MGI"/>
</dbReference>
<dbReference type="GO" id="GO:0015908">
    <property type="term" value="P:fatty acid transport"/>
    <property type="evidence" value="ECO:0000315"/>
    <property type="project" value="MGI"/>
</dbReference>
<dbReference type="GO" id="GO:0048144">
    <property type="term" value="P:fibroblast proliferation"/>
    <property type="evidence" value="ECO:0000316"/>
    <property type="project" value="MGI"/>
</dbReference>
<dbReference type="GO" id="GO:0010467">
    <property type="term" value="P:gene expression"/>
    <property type="evidence" value="ECO:0000315"/>
    <property type="project" value="MGI"/>
</dbReference>
<dbReference type="GO" id="GO:0061535">
    <property type="term" value="P:glutamate secretion, neurotransmission"/>
    <property type="evidence" value="ECO:0000316"/>
    <property type="project" value="MGI"/>
</dbReference>
<dbReference type="GO" id="GO:0007507">
    <property type="term" value="P:heart development"/>
    <property type="evidence" value="ECO:0000315"/>
    <property type="project" value="MGI"/>
</dbReference>
<dbReference type="GO" id="GO:0003007">
    <property type="term" value="P:heart morphogenesis"/>
    <property type="evidence" value="ECO:0000315"/>
    <property type="project" value="MGI"/>
</dbReference>
<dbReference type="GO" id="GO:0006954">
    <property type="term" value="P:inflammatory response"/>
    <property type="evidence" value="ECO:0000315"/>
    <property type="project" value="MGI"/>
</dbReference>
<dbReference type="GO" id="GO:0001822">
    <property type="term" value="P:kidney development"/>
    <property type="evidence" value="ECO:0007669"/>
    <property type="project" value="Ensembl"/>
</dbReference>
<dbReference type="GO" id="GO:0001774">
    <property type="term" value="P:microglial cell activation"/>
    <property type="evidence" value="ECO:0000315"/>
    <property type="project" value="MGI"/>
</dbReference>
<dbReference type="GO" id="GO:0050877">
    <property type="term" value="P:nervous system process"/>
    <property type="evidence" value="ECO:0000315"/>
    <property type="project" value="MGI"/>
</dbReference>
<dbReference type="GO" id="GO:0050905">
    <property type="term" value="P:neuromuscular process"/>
    <property type="evidence" value="ECO:0000315"/>
    <property type="project" value="MGI"/>
</dbReference>
<dbReference type="GO" id="GO:0044546">
    <property type="term" value="P:NLRP3 inflammasome complex assembly"/>
    <property type="evidence" value="ECO:0000314"/>
    <property type="project" value="MGI"/>
</dbReference>
<dbReference type="GO" id="GO:0038066">
    <property type="term" value="P:p38MAPK cascade"/>
    <property type="evidence" value="ECO:0000315"/>
    <property type="project" value="MGI"/>
</dbReference>
<dbReference type="GO" id="GO:0010087">
    <property type="term" value="P:phloem or xylem histogenesis"/>
    <property type="evidence" value="ECO:0000315"/>
    <property type="project" value="MGI"/>
</dbReference>
<dbReference type="GO" id="GO:1990573">
    <property type="term" value="P:potassium ion import across plasma membrane"/>
    <property type="evidence" value="ECO:0007669"/>
    <property type="project" value="Ensembl"/>
</dbReference>
<dbReference type="GO" id="GO:0071805">
    <property type="term" value="P:potassium ion transmembrane transport"/>
    <property type="evidence" value="ECO:0000315"/>
    <property type="project" value="MGI"/>
</dbReference>
<dbReference type="GO" id="GO:0009306">
    <property type="term" value="P:protein secretion"/>
    <property type="evidence" value="ECO:0000315"/>
    <property type="project" value="MGI"/>
</dbReference>
<dbReference type="GO" id="GO:0150103">
    <property type="term" value="P:reactive gliosis"/>
    <property type="evidence" value="ECO:0000315"/>
    <property type="project" value="MGI"/>
</dbReference>
<dbReference type="GO" id="GO:0008217">
    <property type="term" value="P:regulation of blood pressure"/>
    <property type="evidence" value="ECO:0000315"/>
    <property type="project" value="MGI"/>
</dbReference>
<dbReference type="GO" id="GO:0002027">
    <property type="term" value="P:regulation of heart rate"/>
    <property type="evidence" value="ECO:0000315"/>
    <property type="project" value="MGI"/>
</dbReference>
<dbReference type="GO" id="GO:0033198">
    <property type="term" value="P:response to ATP"/>
    <property type="evidence" value="ECO:0000315"/>
    <property type="project" value="MGI"/>
</dbReference>
<dbReference type="GO" id="GO:0034097">
    <property type="term" value="P:response to cytokine"/>
    <property type="evidence" value="ECO:0000315"/>
    <property type="project" value="MGI"/>
</dbReference>
<dbReference type="GO" id="GO:0034976">
    <property type="term" value="P:response to endoplasmic reticulum stress"/>
    <property type="evidence" value="ECO:0000315"/>
    <property type="project" value="MGI"/>
</dbReference>
<dbReference type="GO" id="GO:0043330">
    <property type="term" value="P:response to exogenous dsRNA"/>
    <property type="evidence" value="ECO:0000315"/>
    <property type="project" value="MGI"/>
</dbReference>
<dbReference type="GO" id="GO:0001666">
    <property type="term" value="P:response to hypoxia"/>
    <property type="evidence" value="ECO:0000315"/>
    <property type="project" value="MGI"/>
</dbReference>
<dbReference type="GO" id="GO:0032868">
    <property type="term" value="P:response to insulin"/>
    <property type="evidence" value="ECO:0000315"/>
    <property type="project" value="MGI"/>
</dbReference>
<dbReference type="GO" id="GO:0002931">
    <property type="term" value="P:response to ischemia"/>
    <property type="evidence" value="ECO:0000315"/>
    <property type="project" value="MGI"/>
</dbReference>
<dbReference type="GO" id="GO:0032496">
    <property type="term" value="P:response to lipopolysaccharide"/>
    <property type="evidence" value="ECO:0000315"/>
    <property type="project" value="MGI"/>
</dbReference>
<dbReference type="GO" id="GO:1904638">
    <property type="term" value="P:response to resveratrol"/>
    <property type="evidence" value="ECO:0000315"/>
    <property type="project" value="MGI"/>
</dbReference>
<dbReference type="GO" id="GO:0006950">
    <property type="term" value="P:response to stress"/>
    <property type="evidence" value="ECO:0000316"/>
    <property type="project" value="MGI"/>
</dbReference>
<dbReference type="GO" id="GO:0009410">
    <property type="term" value="P:response to xenobiotic stimulus"/>
    <property type="evidence" value="ECO:0000315"/>
    <property type="project" value="MGI"/>
</dbReference>
<dbReference type="GO" id="GO:0051124">
    <property type="term" value="P:synaptic assembly at neuromuscular junction"/>
    <property type="evidence" value="ECO:0000315"/>
    <property type="project" value="MGI"/>
</dbReference>
<dbReference type="GO" id="GO:0019226">
    <property type="term" value="P:transmission of nerve impulse"/>
    <property type="evidence" value="ECO:0000315"/>
    <property type="project" value="MGI"/>
</dbReference>
<dbReference type="GO" id="GO:0001944">
    <property type="term" value="P:vasculature development"/>
    <property type="evidence" value="ECO:0000315"/>
    <property type="project" value="MGI"/>
</dbReference>
<dbReference type="GO" id="GO:0042311">
    <property type="term" value="P:vasodilation"/>
    <property type="evidence" value="ECO:0000315"/>
    <property type="project" value="MGI"/>
</dbReference>
<dbReference type="GO" id="GO:0003229">
    <property type="term" value="P:ventricular cardiac muscle tissue development"/>
    <property type="evidence" value="ECO:0000316"/>
    <property type="project" value="MGI"/>
</dbReference>
<dbReference type="FunFam" id="1.10.287.70:FF:000050">
    <property type="entry name" value="ATP-sensitive inward rectifier potassium channel 11"/>
    <property type="match status" value="1"/>
</dbReference>
<dbReference type="FunFam" id="2.60.40.1400:FF:000001">
    <property type="entry name" value="G protein-activated inward rectifier potassium channel 2"/>
    <property type="match status" value="1"/>
</dbReference>
<dbReference type="Gene3D" id="1.10.287.70">
    <property type="match status" value="1"/>
</dbReference>
<dbReference type="Gene3D" id="2.60.40.1400">
    <property type="entry name" value="G protein-activated inward rectifier potassium channel 1"/>
    <property type="match status" value="1"/>
</dbReference>
<dbReference type="InterPro" id="IPR014756">
    <property type="entry name" value="Ig_E-set"/>
</dbReference>
<dbReference type="InterPro" id="IPR041647">
    <property type="entry name" value="IRK_C"/>
</dbReference>
<dbReference type="InterPro" id="IPR016449">
    <property type="entry name" value="K_chnl_inward-rec_Kir"/>
</dbReference>
<dbReference type="InterPro" id="IPR003278">
    <property type="entry name" value="K_chnl_inward-rec_Kir6.1"/>
</dbReference>
<dbReference type="InterPro" id="IPR013518">
    <property type="entry name" value="K_chnl_inward-rec_Kir_cyto"/>
</dbReference>
<dbReference type="InterPro" id="IPR040445">
    <property type="entry name" value="Kir_TM"/>
</dbReference>
<dbReference type="PANTHER" id="PTHR11767:SF11">
    <property type="entry name" value="ATP-SENSITIVE INWARD RECTIFIER POTASSIUM CHANNEL 8"/>
    <property type="match status" value="1"/>
</dbReference>
<dbReference type="PANTHER" id="PTHR11767">
    <property type="entry name" value="INWARD RECTIFIER POTASSIUM CHANNEL"/>
    <property type="match status" value="1"/>
</dbReference>
<dbReference type="Pfam" id="PF01007">
    <property type="entry name" value="IRK"/>
    <property type="match status" value="1"/>
</dbReference>
<dbReference type="Pfam" id="PF17655">
    <property type="entry name" value="IRK_C"/>
    <property type="match status" value="1"/>
</dbReference>
<dbReference type="PIRSF" id="PIRSF005465">
    <property type="entry name" value="GIRK_kir"/>
    <property type="match status" value="1"/>
</dbReference>
<dbReference type="PRINTS" id="PR01331">
    <property type="entry name" value="KIR61CHANNEL"/>
</dbReference>
<dbReference type="PRINTS" id="PR01320">
    <property type="entry name" value="KIRCHANNEL"/>
</dbReference>
<dbReference type="SUPFAM" id="SSF81296">
    <property type="entry name" value="E set domains"/>
    <property type="match status" value="1"/>
</dbReference>
<dbReference type="SUPFAM" id="SSF81324">
    <property type="entry name" value="Voltage-gated potassium channels"/>
    <property type="match status" value="1"/>
</dbReference>
<accession>P97794</accession>
<gene>
    <name type="primary">Kcnj8</name>
</gene>
<protein>
    <recommendedName>
        <fullName>ATP-sensitive inward rectifier potassium channel 8</fullName>
    </recommendedName>
    <alternativeName>
        <fullName>Inward rectifier K(+) channel Kir6.1</fullName>
    </alternativeName>
    <alternativeName>
        <fullName>Potassium channel, inwardly rectifying subfamily J member 8</fullName>
    </alternativeName>
    <alternativeName>
        <fullName>uKATP-1</fullName>
    </alternativeName>
</protein>
<organism>
    <name type="scientific">Mus musculus</name>
    <name type="common">Mouse</name>
    <dbReference type="NCBI Taxonomy" id="10090"/>
    <lineage>
        <taxon>Eukaryota</taxon>
        <taxon>Metazoa</taxon>
        <taxon>Chordata</taxon>
        <taxon>Craniata</taxon>
        <taxon>Vertebrata</taxon>
        <taxon>Euteleostomi</taxon>
        <taxon>Mammalia</taxon>
        <taxon>Eutheria</taxon>
        <taxon>Euarchontoglires</taxon>
        <taxon>Glires</taxon>
        <taxon>Rodentia</taxon>
        <taxon>Myomorpha</taxon>
        <taxon>Muroidea</taxon>
        <taxon>Muridae</taxon>
        <taxon>Murinae</taxon>
        <taxon>Mus</taxon>
        <taxon>Mus</taxon>
    </lineage>
</organism>
<proteinExistence type="evidence at protein level"/>
<evidence type="ECO:0000250" key="1"/>
<evidence type="ECO:0000250" key="2">
    <source>
        <dbReference type="UniProtKB" id="Q15842"/>
    </source>
</evidence>
<evidence type="ECO:0000255" key="3"/>
<evidence type="ECO:0000256" key="4">
    <source>
        <dbReference type="SAM" id="MobiDB-lite"/>
    </source>
</evidence>
<evidence type="ECO:0000269" key="5">
    <source>
    </source>
</evidence>
<evidence type="ECO:0000305" key="6"/>
<evidence type="ECO:0007744" key="7">
    <source>
    </source>
</evidence>
<name>KCNJ8_MOUSE</name>
<feature type="chain" id="PRO_0000154948" description="ATP-sensitive inward rectifier potassium channel 8">
    <location>
        <begin position="1"/>
        <end position="424"/>
    </location>
</feature>
<feature type="topological domain" description="Cytoplasmic" evidence="1">
    <location>
        <begin position="1"/>
        <end position="69"/>
    </location>
</feature>
<feature type="transmembrane region" description="Helical; Name=M1" evidence="1">
    <location>
        <begin position="70"/>
        <end position="94"/>
    </location>
</feature>
<feature type="topological domain" description="Extracellular" evidence="1">
    <location>
        <begin position="95"/>
        <end position="126"/>
    </location>
</feature>
<feature type="intramembrane region" description="Helical; Pore-forming; Name=H5" evidence="1">
    <location>
        <begin position="127"/>
        <end position="138"/>
    </location>
</feature>
<feature type="intramembrane region" description="Pore-forming" evidence="1">
    <location>
        <begin position="139"/>
        <end position="145"/>
    </location>
</feature>
<feature type="topological domain" description="Extracellular" evidence="1">
    <location>
        <begin position="146"/>
        <end position="154"/>
    </location>
</feature>
<feature type="transmembrane region" description="Helical; Name=M2" evidence="1">
    <location>
        <begin position="155"/>
        <end position="176"/>
    </location>
</feature>
<feature type="topological domain" description="Cytoplasmic" evidence="1">
    <location>
        <begin position="177"/>
        <end position="424"/>
    </location>
</feature>
<feature type="region of interest" description="Disordered" evidence="4">
    <location>
        <begin position="373"/>
        <end position="409"/>
    </location>
</feature>
<feature type="short sequence motif" description="Selectivity filter" evidence="1">
    <location>
        <begin position="140"/>
        <end position="145"/>
    </location>
</feature>
<feature type="compositionally biased region" description="Low complexity" evidence="4">
    <location>
        <begin position="387"/>
        <end position="404"/>
    </location>
</feature>
<feature type="site" description="Role in the control of polyamine-mediated channel gating and in the blocking by intracellular magnesium" evidence="1">
    <location>
        <position position="170"/>
    </location>
</feature>
<feature type="modified residue" description="Phosphoserine" evidence="7">
    <location>
        <position position="6"/>
    </location>
</feature>
<sequence>MLARKSIIPEEYVLARIAAENLRKPRIRDRLPKARFIAKSGACNLAHKNIREQGRFLQDIFTTLVDLKWRHTLVIFTMSFLCSWLLFAIMWWLVAFAHGDIYAYMEKGTMEKSGLESAVCVTNVRSFTSAFLFSIEVQVTIGFGGRMMTEECPLAITVLILQNIVGLIINAVMLGCIFMKTAQAHRRAETLIFSRHAVIAVRNGKLCFMFRVGDLRKSMIISASVRIQVVKKTTTPEGEVVPIHQQDIPVDNPIESNNIFLVAPLIICHVIDKRSPLYDISATDLANQDLEVIVILEGVVETTGITTQARTSYIAEEIQWGHRFVSIVTEEEGVYSVDYSKFGNTVRVAAPRCSARELDEKPSILIQTLQKSELSHQNSLRKRNSMRRNNSMRRNNSIRRNNSSLMVPKVQFMTPEGNQCPSES</sequence>
<comment type="function">
    <text evidence="2 5">Inward rectifier potassium channels are characterized by a greater tendency to allow potassium to flow into the cell rather than out of it. Their voltage dependence is regulated by the concentration of extracellular potassium; as external potassium is raised, the voltage range of the channel opening shifts to more positive voltages. The inward rectification is mainly due to the blockage of outward current by internal magnesium. This channel is activated by internal ATP and can be blocked by external barium (By similarity). Can form a sulfonylurea-sensitive but ATP-insensitive potassium channel with ABCC9 (PubMed:9130167).</text>
</comment>
<comment type="catalytic activity">
    <reaction evidence="2">
        <text>K(+)(in) = K(+)(out)</text>
        <dbReference type="Rhea" id="RHEA:29463"/>
        <dbReference type="ChEBI" id="CHEBI:29103"/>
    </reaction>
</comment>
<comment type="subunit">
    <text evidence="5">Interacts with ABCC9.</text>
</comment>
<comment type="subcellular location">
    <subcellularLocation>
        <location evidence="3">Membrane</location>
        <topology evidence="3">Multi-pass membrane protein</topology>
    </subcellularLocation>
</comment>
<comment type="similarity">
    <text evidence="6">Belongs to the inward rectifier-type potassium channel (TC 1.A.2.1) family. KCNJ8 subfamily.</text>
</comment>
<reference key="1">
    <citation type="journal article" date="1997" name="J. Physiol. (Lond.)">
        <title>Sulphonylurea receptor 2B and Kir6.1 form a sulphonylurea-sensitive but ATP-insensitive K+ channel.</title>
        <authorList>
            <person name="Yamada M."/>
            <person name="Isomoto S."/>
            <person name="Matsumoto S."/>
            <person name="Kondo C."/>
            <person name="Shindo T."/>
            <person name="Horio Y."/>
            <person name="Kurachi Y."/>
        </authorList>
    </citation>
    <scope>NUCLEOTIDE SEQUENCE [MRNA]</scope>
    <scope>FUNCTION</scope>
    <scope>INTERACTION WITH ABCC9</scope>
    <source>
        <tissue>Brain</tissue>
    </source>
</reference>
<reference key="2">
    <citation type="journal article" date="2004" name="Genome Res.">
        <title>The status, quality, and expansion of the NIH full-length cDNA project: the Mammalian Gene Collection (MGC).</title>
        <authorList>
            <consortium name="The MGC Project Team"/>
        </authorList>
    </citation>
    <scope>NUCLEOTIDE SEQUENCE [LARGE SCALE MRNA]</scope>
    <source>
        <strain>C57BL/6J</strain>
        <tissue>Mammary gland</tissue>
    </source>
</reference>
<reference key="3">
    <citation type="journal article" date="2010" name="Cell">
        <title>A tissue-specific atlas of mouse protein phosphorylation and expression.</title>
        <authorList>
            <person name="Huttlin E.L."/>
            <person name="Jedrychowski M.P."/>
            <person name="Elias J.E."/>
            <person name="Goswami T."/>
            <person name="Rad R."/>
            <person name="Beausoleil S.A."/>
            <person name="Villen J."/>
            <person name="Haas W."/>
            <person name="Sowa M.E."/>
            <person name="Gygi S.P."/>
        </authorList>
    </citation>
    <scope>PHOSPHORYLATION [LARGE SCALE ANALYSIS] AT SER-6</scope>
    <scope>IDENTIFICATION BY MASS SPECTROMETRY [LARGE SCALE ANALYSIS]</scope>
    <source>
        <tissue>Heart</tissue>
        <tissue>Kidney</tissue>
        <tissue>Spleen</tissue>
    </source>
</reference>